<dbReference type="EMBL" id="AY075046">
    <property type="protein sequence ID" value="AAL78085.1"/>
    <property type="molecule type" value="Genomic_DNA"/>
</dbReference>
<dbReference type="EMBL" id="CP000951">
    <property type="protein sequence ID" value="ACA98243.1"/>
    <property type="molecule type" value="Genomic_DNA"/>
</dbReference>
<dbReference type="RefSeq" id="WP_012305867.1">
    <property type="nucleotide sequence ID" value="NZ_JAHHPU010000004.1"/>
</dbReference>
<dbReference type="STRING" id="32049.SYNPCC7002_A0231"/>
<dbReference type="KEGG" id="syp:SYNPCC7002_A0231"/>
<dbReference type="eggNOG" id="ENOG50332KX">
    <property type="taxonomic scope" value="Bacteria"/>
</dbReference>
<dbReference type="HOGENOM" id="CLU_211753_1_0_3"/>
<dbReference type="Proteomes" id="UP000001688">
    <property type="component" value="Chromosome"/>
</dbReference>
<dbReference type="GO" id="GO:0009539">
    <property type="term" value="C:photosystem II reaction center"/>
    <property type="evidence" value="ECO:0007669"/>
    <property type="project" value="InterPro"/>
</dbReference>
<dbReference type="GO" id="GO:0031676">
    <property type="term" value="C:plasma membrane-derived thylakoid membrane"/>
    <property type="evidence" value="ECO:0007669"/>
    <property type="project" value="UniProtKB-SubCell"/>
</dbReference>
<dbReference type="GO" id="GO:0009055">
    <property type="term" value="F:electron transfer activity"/>
    <property type="evidence" value="ECO:0007669"/>
    <property type="project" value="UniProtKB-UniRule"/>
</dbReference>
<dbReference type="GO" id="GO:0020037">
    <property type="term" value="F:heme binding"/>
    <property type="evidence" value="ECO:0007669"/>
    <property type="project" value="InterPro"/>
</dbReference>
<dbReference type="GO" id="GO:0005506">
    <property type="term" value="F:iron ion binding"/>
    <property type="evidence" value="ECO:0007669"/>
    <property type="project" value="UniProtKB-UniRule"/>
</dbReference>
<dbReference type="GO" id="GO:0009767">
    <property type="term" value="P:photosynthetic electron transport chain"/>
    <property type="evidence" value="ECO:0007669"/>
    <property type="project" value="InterPro"/>
</dbReference>
<dbReference type="HAMAP" id="MF_00643">
    <property type="entry name" value="PSII_PsbF"/>
    <property type="match status" value="1"/>
</dbReference>
<dbReference type="InterPro" id="IPR006241">
    <property type="entry name" value="PSII_cyt_b559_bsu"/>
</dbReference>
<dbReference type="InterPro" id="IPR006216">
    <property type="entry name" value="PSII_cyt_b559_CS"/>
</dbReference>
<dbReference type="InterPro" id="IPR013081">
    <property type="entry name" value="PSII_cyt_b559_N"/>
</dbReference>
<dbReference type="NCBIfam" id="TIGR01333">
    <property type="entry name" value="cyt_b559_beta"/>
    <property type="match status" value="1"/>
</dbReference>
<dbReference type="Pfam" id="PF00283">
    <property type="entry name" value="Cytochrom_B559"/>
    <property type="match status" value="1"/>
</dbReference>
<dbReference type="PIRSF" id="PIRSF000037">
    <property type="entry name" value="PsbF"/>
    <property type="match status" value="1"/>
</dbReference>
<dbReference type="SUPFAM" id="SSF161045">
    <property type="entry name" value="Cytochrome b559 subunits"/>
    <property type="match status" value="1"/>
</dbReference>
<dbReference type="PROSITE" id="PS00537">
    <property type="entry name" value="CYTOCHROME_B559"/>
    <property type="match status" value="1"/>
</dbReference>
<organism>
    <name type="scientific">Picosynechococcus sp. (strain ATCC 27264 / PCC 7002 / PR-6)</name>
    <name type="common">Agmenellum quadruplicatum</name>
    <dbReference type="NCBI Taxonomy" id="32049"/>
    <lineage>
        <taxon>Bacteria</taxon>
        <taxon>Bacillati</taxon>
        <taxon>Cyanobacteriota</taxon>
        <taxon>Cyanophyceae</taxon>
        <taxon>Oscillatoriophycideae</taxon>
        <taxon>Chroococcales</taxon>
        <taxon>Geminocystaceae</taxon>
        <taxon>Picosynechococcus</taxon>
    </lineage>
</organism>
<feature type="chain" id="PRO_0000200473" description="Cytochrome b559 subunit beta">
    <location>
        <begin position="1"/>
        <end position="43"/>
    </location>
</feature>
<feature type="transmembrane region" description="Helical" evidence="1">
    <location>
        <begin position="18"/>
        <end position="34"/>
    </location>
</feature>
<feature type="binding site" description="axial binding residue" evidence="1">
    <location>
        <position position="22"/>
    </location>
    <ligand>
        <name>heme</name>
        <dbReference type="ChEBI" id="CHEBI:30413"/>
        <note>ligand shared with alpha subunit</note>
    </ligand>
    <ligandPart>
        <name>Fe</name>
        <dbReference type="ChEBI" id="CHEBI:18248"/>
    </ligandPart>
</feature>
<comment type="function">
    <text evidence="1">This b-type cytochrome is tightly associated with the reaction center of photosystem II (PSII). PSII is a light-driven water:plastoquinone oxidoreductase that uses light energy to abstract electrons from H(2)O, generating O(2) and a proton gradient subsequently used for ATP formation. It consists of a core antenna complex that captures photons, and an electron transfer chain that converts photonic excitation into a charge separation.</text>
</comment>
<comment type="cofactor">
    <cofactor evidence="1">
        <name>heme b</name>
        <dbReference type="ChEBI" id="CHEBI:60344"/>
    </cofactor>
    <text evidence="1">With its partner (PsbE) binds heme. PSII binds additional chlorophylls, carotenoids and specific lipids.</text>
</comment>
<comment type="subunit">
    <text evidence="1">Heterodimer of an alpha subunit and a beta subunit. PSII is composed of 1 copy each of membrane proteins PsbA, PsbB, PsbC, PsbD, PsbE, PsbF, PsbH, PsbI, PsbJ, PsbK, PsbL, PsbM, PsbT, PsbX, PsbY, PsbZ, Psb30/Ycf12, peripheral proteins PsbO, CyanoQ (PsbQ), PsbU, PsbV and a large number of cofactors. It forms dimeric complexes.</text>
</comment>
<comment type="subcellular location">
    <subcellularLocation>
        <location evidence="1">Cellular thylakoid membrane</location>
        <topology evidence="1">Single-pass membrane protein</topology>
    </subcellularLocation>
</comment>
<comment type="similarity">
    <text evidence="1">Belongs to the PsbE/PsbF family.</text>
</comment>
<evidence type="ECO:0000255" key="1">
    <source>
        <dbReference type="HAMAP-Rule" id="MF_00643"/>
    </source>
</evidence>
<sequence>MTSGPNQPVSYPIFTVRWLAVHTLAVPSVFFLGAIAAMQFIQR</sequence>
<protein>
    <recommendedName>
        <fullName evidence="1">Cytochrome b559 subunit beta</fullName>
    </recommendedName>
    <alternativeName>
        <fullName evidence="1">PSII reaction center subunit VI</fullName>
    </alternativeName>
</protein>
<reference key="1">
    <citation type="journal article" date="2002" name="J. Biol. Chem.">
        <title>Assembly of photosystem I. I. Inactivation of the rubA gene encoding a membrane-associated rubredoxin in the cyanobacterium Synechococcus sp. PCC 7002 causes a loss of photosystem I activity.</title>
        <authorList>
            <person name="Shen G."/>
            <person name="Zhao J."/>
            <person name="Reimer S.K."/>
            <person name="Antonkine M.L."/>
            <person name="Cai Q."/>
            <person name="Weiland S.M."/>
            <person name="Golbeck J.H."/>
            <person name="Bryant D.A."/>
        </authorList>
    </citation>
    <scope>NUCLEOTIDE SEQUENCE [GENOMIC DNA]</scope>
</reference>
<reference key="2">
    <citation type="submission" date="2008-02" db="EMBL/GenBank/DDBJ databases">
        <title>Complete sequence of Synechococcus sp. PCC 7002.</title>
        <authorList>
            <person name="Li T."/>
            <person name="Zhao J."/>
            <person name="Zhao C."/>
            <person name="Liu Z."/>
            <person name="Zhao F."/>
            <person name="Marquardt J."/>
            <person name="Nomura C.T."/>
            <person name="Persson S."/>
            <person name="Detter J.C."/>
            <person name="Richardson P.M."/>
            <person name="Lanz C."/>
            <person name="Schuster S.C."/>
            <person name="Wang J."/>
            <person name="Li S."/>
            <person name="Huang X."/>
            <person name="Cai T."/>
            <person name="Yu Z."/>
            <person name="Luo J."/>
            <person name="Zhao J."/>
            <person name="Bryant D.A."/>
        </authorList>
    </citation>
    <scope>NUCLEOTIDE SEQUENCE [LARGE SCALE GENOMIC DNA]</scope>
    <source>
        <strain>ATCC 27264 / PCC 7002 / PR-6</strain>
    </source>
</reference>
<name>PSBF_PICP2</name>
<keyword id="KW-0249">Electron transport</keyword>
<keyword id="KW-0349">Heme</keyword>
<keyword id="KW-0408">Iron</keyword>
<keyword id="KW-0472">Membrane</keyword>
<keyword id="KW-0479">Metal-binding</keyword>
<keyword id="KW-0602">Photosynthesis</keyword>
<keyword id="KW-0604">Photosystem II</keyword>
<keyword id="KW-1185">Reference proteome</keyword>
<keyword id="KW-0793">Thylakoid</keyword>
<keyword id="KW-0812">Transmembrane</keyword>
<keyword id="KW-1133">Transmembrane helix</keyword>
<keyword id="KW-0813">Transport</keyword>
<gene>
    <name evidence="1" type="primary">psbF</name>
    <name type="ordered locus">SYNPCC7002_A0231</name>
</gene>
<accession>Q8RSW2</accession>
<accession>B1XMQ6</accession>
<proteinExistence type="inferred from homology"/>